<evidence type="ECO:0000255" key="1">
    <source>
        <dbReference type="HAMAP-Rule" id="MF_01631"/>
    </source>
</evidence>
<accession>Q9CEF8</accession>
<feature type="chain" id="PRO_0000233789" description="Bifunctional protein GlmU">
    <location>
        <begin position="1"/>
        <end position="458"/>
    </location>
</feature>
<feature type="region of interest" description="Pyrophosphorylase" evidence="1">
    <location>
        <begin position="1"/>
        <end position="229"/>
    </location>
</feature>
<feature type="region of interest" description="Linker" evidence="1">
    <location>
        <begin position="230"/>
        <end position="250"/>
    </location>
</feature>
<feature type="region of interest" description="N-acetyltransferase" evidence="1">
    <location>
        <begin position="251"/>
        <end position="458"/>
    </location>
</feature>
<feature type="active site" description="Proton acceptor" evidence="1">
    <location>
        <position position="362"/>
    </location>
</feature>
<feature type="binding site" evidence="1">
    <location>
        <begin position="8"/>
        <end position="11"/>
    </location>
    <ligand>
        <name>UDP-N-acetyl-alpha-D-glucosamine</name>
        <dbReference type="ChEBI" id="CHEBI:57705"/>
    </ligand>
</feature>
<feature type="binding site" evidence="1">
    <location>
        <position position="22"/>
    </location>
    <ligand>
        <name>UDP-N-acetyl-alpha-D-glucosamine</name>
        <dbReference type="ChEBI" id="CHEBI:57705"/>
    </ligand>
</feature>
<feature type="binding site" evidence="1">
    <location>
        <position position="72"/>
    </location>
    <ligand>
        <name>UDP-N-acetyl-alpha-D-glucosamine</name>
        <dbReference type="ChEBI" id="CHEBI:57705"/>
    </ligand>
</feature>
<feature type="binding site" evidence="1">
    <location>
        <begin position="77"/>
        <end position="78"/>
    </location>
    <ligand>
        <name>UDP-N-acetyl-alpha-D-glucosamine</name>
        <dbReference type="ChEBI" id="CHEBI:57705"/>
    </ligand>
</feature>
<feature type="binding site" evidence="1">
    <location>
        <position position="102"/>
    </location>
    <ligand>
        <name>Mg(2+)</name>
        <dbReference type="ChEBI" id="CHEBI:18420"/>
    </ligand>
</feature>
<feature type="binding site" evidence="1">
    <location>
        <position position="139"/>
    </location>
    <ligand>
        <name>UDP-N-acetyl-alpha-D-glucosamine</name>
        <dbReference type="ChEBI" id="CHEBI:57705"/>
    </ligand>
</feature>
<feature type="binding site" evidence="1">
    <location>
        <position position="154"/>
    </location>
    <ligand>
        <name>UDP-N-acetyl-alpha-D-glucosamine</name>
        <dbReference type="ChEBI" id="CHEBI:57705"/>
    </ligand>
</feature>
<feature type="binding site" evidence="1">
    <location>
        <position position="169"/>
    </location>
    <ligand>
        <name>UDP-N-acetyl-alpha-D-glucosamine</name>
        <dbReference type="ChEBI" id="CHEBI:57705"/>
    </ligand>
</feature>
<feature type="binding site" evidence="1">
    <location>
        <position position="227"/>
    </location>
    <ligand>
        <name>Mg(2+)</name>
        <dbReference type="ChEBI" id="CHEBI:18420"/>
    </ligand>
</feature>
<feature type="binding site" evidence="1">
    <location>
        <position position="227"/>
    </location>
    <ligand>
        <name>UDP-N-acetyl-alpha-D-glucosamine</name>
        <dbReference type="ChEBI" id="CHEBI:57705"/>
    </ligand>
</feature>
<feature type="binding site" evidence="1">
    <location>
        <position position="332"/>
    </location>
    <ligand>
        <name>UDP-N-acetyl-alpha-D-glucosamine</name>
        <dbReference type="ChEBI" id="CHEBI:57705"/>
    </ligand>
</feature>
<feature type="binding site" evidence="1">
    <location>
        <position position="350"/>
    </location>
    <ligand>
        <name>UDP-N-acetyl-alpha-D-glucosamine</name>
        <dbReference type="ChEBI" id="CHEBI:57705"/>
    </ligand>
</feature>
<feature type="binding site" evidence="1">
    <location>
        <position position="365"/>
    </location>
    <ligand>
        <name>UDP-N-acetyl-alpha-D-glucosamine</name>
        <dbReference type="ChEBI" id="CHEBI:57705"/>
    </ligand>
</feature>
<feature type="binding site" evidence="1">
    <location>
        <position position="376"/>
    </location>
    <ligand>
        <name>UDP-N-acetyl-alpha-D-glucosamine</name>
        <dbReference type="ChEBI" id="CHEBI:57705"/>
    </ligand>
</feature>
<feature type="binding site" evidence="1">
    <location>
        <position position="379"/>
    </location>
    <ligand>
        <name>acetyl-CoA</name>
        <dbReference type="ChEBI" id="CHEBI:57288"/>
    </ligand>
</feature>
<feature type="binding site" evidence="1">
    <location>
        <position position="404"/>
    </location>
    <ligand>
        <name>acetyl-CoA</name>
        <dbReference type="ChEBI" id="CHEBI:57288"/>
    </ligand>
</feature>
<feature type="binding site" evidence="1">
    <location>
        <position position="422"/>
    </location>
    <ligand>
        <name>acetyl-CoA</name>
        <dbReference type="ChEBI" id="CHEBI:57288"/>
    </ligand>
</feature>
<feature type="binding site" evidence="1">
    <location>
        <position position="439"/>
    </location>
    <ligand>
        <name>acetyl-CoA</name>
        <dbReference type="ChEBI" id="CHEBI:57288"/>
    </ligand>
</feature>
<sequence>MNKFAIVLAAGKGTRMKSALPKVLHQVAGKSMLAHVLTSVSEVEIAKNVVIVGHEADRVIATLPKGTQFVKQVEQLGTGHAVRIAADLLANEDGATLVIAGDTPLITGQTLEALFDYHFAQNATATILTAIAPNPTGYGRIIRDENGSVEKIVEQKDANDFEKSITEINTGTYIFDNKSLFKALNEITTDNAQGEYYLTDVIEIFKKAGQTVAAHILDDFDESLGVNDRVALSQAELTMRKRINHQHMVNGVTLIDPATTYIDSEVTIGEETVIEANVTIKGNTFIGKNVLITNGSRIENSEIHSNCEVRNSTVEESRMSVGSNVGPYAHLRPGTVLSEEVHVGNFVEIKGSTLGKGTKAGHLTYIGNATVGEKVNFGAGTITANFDGKNKFNTEIDDFAFIGSNSTIIAPLHIGKNALTAAGSVVTEDVPDEAVEIGRGKQVNKLGRAKKMPHYRGQ</sequence>
<reference key="1">
    <citation type="journal article" date="2001" name="Genome Res.">
        <title>The complete genome sequence of the lactic acid bacterium Lactococcus lactis ssp. lactis IL1403.</title>
        <authorList>
            <person name="Bolotin A."/>
            <person name="Wincker P."/>
            <person name="Mauger S."/>
            <person name="Jaillon O."/>
            <person name="Malarme K."/>
            <person name="Weissenbach J."/>
            <person name="Ehrlich S.D."/>
            <person name="Sorokin A."/>
        </authorList>
    </citation>
    <scope>NUCLEOTIDE SEQUENCE [LARGE SCALE GENOMIC DNA]</scope>
    <source>
        <strain>IL1403</strain>
    </source>
</reference>
<proteinExistence type="inferred from homology"/>
<keyword id="KW-0012">Acyltransferase</keyword>
<keyword id="KW-0133">Cell shape</keyword>
<keyword id="KW-0961">Cell wall biogenesis/degradation</keyword>
<keyword id="KW-0963">Cytoplasm</keyword>
<keyword id="KW-0460">Magnesium</keyword>
<keyword id="KW-0479">Metal-binding</keyword>
<keyword id="KW-0511">Multifunctional enzyme</keyword>
<keyword id="KW-0548">Nucleotidyltransferase</keyword>
<keyword id="KW-0573">Peptidoglycan synthesis</keyword>
<keyword id="KW-1185">Reference proteome</keyword>
<keyword id="KW-0677">Repeat</keyword>
<keyword id="KW-0808">Transferase</keyword>
<protein>
    <recommendedName>
        <fullName evidence="1">Bifunctional protein GlmU</fullName>
    </recommendedName>
    <domain>
        <recommendedName>
            <fullName evidence="1">UDP-N-acetylglucosamine pyrophosphorylase</fullName>
            <ecNumber evidence="1">2.7.7.23</ecNumber>
        </recommendedName>
        <alternativeName>
            <fullName evidence="1">N-acetylglucosamine-1-phosphate uridyltransferase</fullName>
        </alternativeName>
    </domain>
    <domain>
        <recommendedName>
            <fullName evidence="1">Glucosamine-1-phosphate N-acetyltransferase</fullName>
            <ecNumber evidence="1">2.3.1.157</ecNumber>
        </recommendedName>
    </domain>
</protein>
<gene>
    <name evidence="1" type="primary">glmU</name>
    <name type="ordered locus">LL1883</name>
    <name type="ORF">L134450</name>
</gene>
<comment type="function">
    <text evidence="1">Catalyzes the last two sequential reactions in the de novo biosynthetic pathway for UDP-N-acetylglucosamine (UDP-GlcNAc). The C-terminal domain catalyzes the transfer of acetyl group from acetyl coenzyme A to glucosamine-1-phosphate (GlcN-1-P) to produce N-acetylglucosamine-1-phosphate (GlcNAc-1-P), which is converted into UDP-GlcNAc by the transfer of uridine 5-monophosphate (from uridine 5-triphosphate), a reaction catalyzed by the N-terminal domain.</text>
</comment>
<comment type="catalytic activity">
    <reaction evidence="1">
        <text>alpha-D-glucosamine 1-phosphate + acetyl-CoA = N-acetyl-alpha-D-glucosamine 1-phosphate + CoA + H(+)</text>
        <dbReference type="Rhea" id="RHEA:13725"/>
        <dbReference type="ChEBI" id="CHEBI:15378"/>
        <dbReference type="ChEBI" id="CHEBI:57287"/>
        <dbReference type="ChEBI" id="CHEBI:57288"/>
        <dbReference type="ChEBI" id="CHEBI:57776"/>
        <dbReference type="ChEBI" id="CHEBI:58516"/>
        <dbReference type="EC" id="2.3.1.157"/>
    </reaction>
</comment>
<comment type="catalytic activity">
    <reaction evidence="1">
        <text>N-acetyl-alpha-D-glucosamine 1-phosphate + UTP + H(+) = UDP-N-acetyl-alpha-D-glucosamine + diphosphate</text>
        <dbReference type="Rhea" id="RHEA:13509"/>
        <dbReference type="ChEBI" id="CHEBI:15378"/>
        <dbReference type="ChEBI" id="CHEBI:33019"/>
        <dbReference type="ChEBI" id="CHEBI:46398"/>
        <dbReference type="ChEBI" id="CHEBI:57705"/>
        <dbReference type="ChEBI" id="CHEBI:57776"/>
        <dbReference type="EC" id="2.7.7.23"/>
    </reaction>
</comment>
<comment type="cofactor">
    <cofactor evidence="1">
        <name>Mg(2+)</name>
        <dbReference type="ChEBI" id="CHEBI:18420"/>
    </cofactor>
    <text evidence="1">Binds 1 Mg(2+) ion per subunit.</text>
</comment>
<comment type="pathway">
    <text evidence="1">Nucleotide-sugar biosynthesis; UDP-N-acetyl-alpha-D-glucosamine biosynthesis; N-acetyl-alpha-D-glucosamine 1-phosphate from alpha-D-glucosamine 6-phosphate (route II): step 2/2.</text>
</comment>
<comment type="pathway">
    <text evidence="1">Nucleotide-sugar biosynthesis; UDP-N-acetyl-alpha-D-glucosamine biosynthesis; UDP-N-acetyl-alpha-D-glucosamine from N-acetyl-alpha-D-glucosamine 1-phosphate: step 1/1.</text>
</comment>
<comment type="pathway">
    <text evidence="1">Bacterial outer membrane biogenesis; LPS lipid A biosynthesis.</text>
</comment>
<comment type="subunit">
    <text evidence="1">Homotrimer.</text>
</comment>
<comment type="subcellular location">
    <subcellularLocation>
        <location evidence="1">Cytoplasm</location>
    </subcellularLocation>
</comment>
<comment type="similarity">
    <text evidence="1">In the N-terminal section; belongs to the N-acetylglucosamine-1-phosphate uridyltransferase family.</text>
</comment>
<comment type="similarity">
    <text evidence="1">In the C-terminal section; belongs to the transferase hexapeptide repeat family.</text>
</comment>
<name>GLMU_LACLA</name>
<organism>
    <name type="scientific">Lactococcus lactis subsp. lactis (strain IL1403)</name>
    <name type="common">Streptococcus lactis</name>
    <dbReference type="NCBI Taxonomy" id="272623"/>
    <lineage>
        <taxon>Bacteria</taxon>
        <taxon>Bacillati</taxon>
        <taxon>Bacillota</taxon>
        <taxon>Bacilli</taxon>
        <taxon>Lactobacillales</taxon>
        <taxon>Streptococcaceae</taxon>
        <taxon>Lactococcus</taxon>
    </lineage>
</organism>
<dbReference type="EC" id="2.7.7.23" evidence="1"/>
<dbReference type="EC" id="2.3.1.157" evidence="1"/>
<dbReference type="EMBL" id="AE005176">
    <property type="protein sequence ID" value="AAK05981.1"/>
    <property type="molecule type" value="Genomic_DNA"/>
</dbReference>
<dbReference type="PIR" id="C86860">
    <property type="entry name" value="C86860"/>
</dbReference>
<dbReference type="RefSeq" id="NP_268040.1">
    <property type="nucleotide sequence ID" value="NC_002662.1"/>
</dbReference>
<dbReference type="RefSeq" id="WP_003130798.1">
    <property type="nucleotide sequence ID" value="NC_002662.1"/>
</dbReference>
<dbReference type="SMR" id="Q9CEF8"/>
<dbReference type="PaxDb" id="272623-L134450"/>
<dbReference type="EnsemblBacteria" id="AAK05981">
    <property type="protein sequence ID" value="AAK05981"/>
    <property type="gene ID" value="L134450"/>
</dbReference>
<dbReference type="GeneID" id="89634240"/>
<dbReference type="KEGG" id="lla:L134450"/>
<dbReference type="PATRIC" id="fig|272623.7.peg.2017"/>
<dbReference type="eggNOG" id="COG1207">
    <property type="taxonomic scope" value="Bacteria"/>
</dbReference>
<dbReference type="HOGENOM" id="CLU_029499_15_2_9"/>
<dbReference type="OrthoDB" id="9775031at2"/>
<dbReference type="UniPathway" id="UPA00113">
    <property type="reaction ID" value="UER00532"/>
</dbReference>
<dbReference type="UniPathway" id="UPA00113">
    <property type="reaction ID" value="UER00533"/>
</dbReference>
<dbReference type="UniPathway" id="UPA00973"/>
<dbReference type="Proteomes" id="UP000002196">
    <property type="component" value="Chromosome"/>
</dbReference>
<dbReference type="GO" id="GO:0005737">
    <property type="term" value="C:cytoplasm"/>
    <property type="evidence" value="ECO:0007669"/>
    <property type="project" value="UniProtKB-SubCell"/>
</dbReference>
<dbReference type="GO" id="GO:0016020">
    <property type="term" value="C:membrane"/>
    <property type="evidence" value="ECO:0007669"/>
    <property type="project" value="GOC"/>
</dbReference>
<dbReference type="GO" id="GO:0019134">
    <property type="term" value="F:glucosamine-1-phosphate N-acetyltransferase activity"/>
    <property type="evidence" value="ECO:0007669"/>
    <property type="project" value="UniProtKB-UniRule"/>
</dbReference>
<dbReference type="GO" id="GO:0000287">
    <property type="term" value="F:magnesium ion binding"/>
    <property type="evidence" value="ECO:0007669"/>
    <property type="project" value="UniProtKB-UniRule"/>
</dbReference>
<dbReference type="GO" id="GO:0003977">
    <property type="term" value="F:UDP-N-acetylglucosamine diphosphorylase activity"/>
    <property type="evidence" value="ECO:0007669"/>
    <property type="project" value="UniProtKB-UniRule"/>
</dbReference>
<dbReference type="GO" id="GO:0000902">
    <property type="term" value="P:cell morphogenesis"/>
    <property type="evidence" value="ECO:0007669"/>
    <property type="project" value="UniProtKB-UniRule"/>
</dbReference>
<dbReference type="GO" id="GO:0071555">
    <property type="term" value="P:cell wall organization"/>
    <property type="evidence" value="ECO:0007669"/>
    <property type="project" value="UniProtKB-KW"/>
</dbReference>
<dbReference type="GO" id="GO:0009245">
    <property type="term" value="P:lipid A biosynthetic process"/>
    <property type="evidence" value="ECO:0007669"/>
    <property type="project" value="UniProtKB-UniRule"/>
</dbReference>
<dbReference type="GO" id="GO:0009252">
    <property type="term" value="P:peptidoglycan biosynthetic process"/>
    <property type="evidence" value="ECO:0007669"/>
    <property type="project" value="UniProtKB-UniRule"/>
</dbReference>
<dbReference type="GO" id="GO:0008360">
    <property type="term" value="P:regulation of cell shape"/>
    <property type="evidence" value="ECO:0007669"/>
    <property type="project" value="UniProtKB-KW"/>
</dbReference>
<dbReference type="GO" id="GO:0006048">
    <property type="term" value="P:UDP-N-acetylglucosamine biosynthetic process"/>
    <property type="evidence" value="ECO:0007669"/>
    <property type="project" value="UniProtKB-UniPathway"/>
</dbReference>
<dbReference type="CDD" id="cd02540">
    <property type="entry name" value="GT2_GlmU_N_bac"/>
    <property type="match status" value="1"/>
</dbReference>
<dbReference type="CDD" id="cd03353">
    <property type="entry name" value="LbH_GlmU_C"/>
    <property type="match status" value="1"/>
</dbReference>
<dbReference type="Gene3D" id="2.160.10.10">
    <property type="entry name" value="Hexapeptide repeat proteins"/>
    <property type="match status" value="1"/>
</dbReference>
<dbReference type="Gene3D" id="3.90.550.10">
    <property type="entry name" value="Spore Coat Polysaccharide Biosynthesis Protein SpsA, Chain A"/>
    <property type="match status" value="1"/>
</dbReference>
<dbReference type="HAMAP" id="MF_01631">
    <property type="entry name" value="GlmU"/>
    <property type="match status" value="1"/>
</dbReference>
<dbReference type="InterPro" id="IPR005882">
    <property type="entry name" value="Bifunctional_GlmU"/>
</dbReference>
<dbReference type="InterPro" id="IPR050065">
    <property type="entry name" value="GlmU-like"/>
</dbReference>
<dbReference type="InterPro" id="IPR038009">
    <property type="entry name" value="GlmU_C_LbH"/>
</dbReference>
<dbReference type="InterPro" id="IPR001451">
    <property type="entry name" value="Hexapep"/>
</dbReference>
<dbReference type="InterPro" id="IPR005835">
    <property type="entry name" value="NTP_transferase_dom"/>
</dbReference>
<dbReference type="InterPro" id="IPR029044">
    <property type="entry name" value="Nucleotide-diphossugar_trans"/>
</dbReference>
<dbReference type="InterPro" id="IPR011004">
    <property type="entry name" value="Trimer_LpxA-like_sf"/>
</dbReference>
<dbReference type="NCBIfam" id="TIGR01173">
    <property type="entry name" value="glmU"/>
    <property type="match status" value="1"/>
</dbReference>
<dbReference type="NCBIfam" id="NF010934">
    <property type="entry name" value="PRK14354.1"/>
    <property type="match status" value="1"/>
</dbReference>
<dbReference type="PANTHER" id="PTHR43584:SF3">
    <property type="entry name" value="BIFUNCTIONAL PROTEIN GLMU"/>
    <property type="match status" value="1"/>
</dbReference>
<dbReference type="PANTHER" id="PTHR43584">
    <property type="entry name" value="NUCLEOTIDYL TRANSFERASE"/>
    <property type="match status" value="1"/>
</dbReference>
<dbReference type="Pfam" id="PF14602">
    <property type="entry name" value="Hexapep_2"/>
    <property type="match status" value="1"/>
</dbReference>
<dbReference type="Pfam" id="PF00483">
    <property type="entry name" value="NTP_transferase"/>
    <property type="match status" value="1"/>
</dbReference>
<dbReference type="SUPFAM" id="SSF53448">
    <property type="entry name" value="Nucleotide-diphospho-sugar transferases"/>
    <property type="match status" value="1"/>
</dbReference>
<dbReference type="SUPFAM" id="SSF51161">
    <property type="entry name" value="Trimeric LpxA-like enzymes"/>
    <property type="match status" value="1"/>
</dbReference>